<name>SH_RAT</name>
<comment type="function">
    <text>May be involved with the regulation of GNRH gene expression. It is not known if this protein is transcribed.</text>
</comment>
<comment type="tissue specificity">
    <text>Heart.</text>
</comment>
<proteinExistence type="evidence at transcript level"/>
<sequence length="106" mass="11792">MAHAVRSKSNWCWQTYLLERINQVFSISLPPRAQPIGPVLAGAAFQTHSQQNNSGHQFGDRFHSKGHQDTEGRILWKEASTRTTDSTETADTQLVQRQGNGGICLS</sequence>
<organism>
    <name type="scientific">Rattus norvegicus</name>
    <name type="common">Rat</name>
    <dbReference type="NCBI Taxonomy" id="10116"/>
    <lineage>
        <taxon>Eukaryota</taxon>
        <taxon>Metazoa</taxon>
        <taxon>Chordata</taxon>
        <taxon>Craniata</taxon>
        <taxon>Vertebrata</taxon>
        <taxon>Euteleostomi</taxon>
        <taxon>Mammalia</taxon>
        <taxon>Eutheria</taxon>
        <taxon>Euarchontoglires</taxon>
        <taxon>Glires</taxon>
        <taxon>Rodentia</taxon>
        <taxon>Myomorpha</taxon>
        <taxon>Muroidea</taxon>
        <taxon>Muridae</taxon>
        <taxon>Murinae</taxon>
        <taxon>Rattus</taxon>
    </lineage>
</organism>
<accession>P55248</accession>
<keyword id="KW-1185">Reference proteome</keyword>
<feature type="chain" id="PRO_0000097749" description="Putative protein SH">
    <location>
        <begin position="1"/>
        <end position="106"/>
    </location>
</feature>
<feature type="region of interest" description="Disordered" evidence="1">
    <location>
        <begin position="48"/>
        <end position="106"/>
    </location>
</feature>
<feature type="compositionally biased region" description="Basic and acidic residues" evidence="1">
    <location>
        <begin position="58"/>
        <end position="80"/>
    </location>
</feature>
<feature type="compositionally biased region" description="Low complexity" evidence="1">
    <location>
        <begin position="81"/>
        <end position="92"/>
    </location>
</feature>
<evidence type="ECO:0000256" key="1">
    <source>
        <dbReference type="SAM" id="MobiDB-lite"/>
    </source>
</evidence>
<reference key="1">
    <citation type="journal article" date="1987" name="Science">
        <title>Two mammalian genes transcribed from opposite strands of the same DNA locus.</title>
        <authorList>
            <person name="Adelman J.P."/>
            <person name="Bond C.T."/>
            <person name="Douglass J."/>
            <person name="Herbert E."/>
        </authorList>
    </citation>
    <scope>NUCLEOTIDE SEQUENCE [MRNA]</scope>
    <source>
        <tissue>Heart</tissue>
    </source>
</reference>
<protein>
    <recommendedName>
        <fullName>Putative protein SH</fullName>
    </recommendedName>
    <alternativeName>
        <fullName>SH-4</fullName>
    </alternativeName>
</protein>
<dbReference type="EMBL" id="M15527">
    <property type="protein sequence ID" value="AAA42140.1"/>
    <property type="molecule type" value="mRNA"/>
</dbReference>
<dbReference type="PIR" id="A29760">
    <property type="entry name" value="A29760"/>
</dbReference>
<dbReference type="STRING" id="10116.ENSRNOP00000017939"/>
<dbReference type="PaxDb" id="10116-ENSRNOP00000017939"/>
<dbReference type="Ensembl" id="ENSRNOT00000017939.5">
    <property type="protein sequence ID" value="ENSRNOP00000017939.1"/>
    <property type="gene ID" value="ENSRNOG00000013433.5"/>
</dbReference>
<dbReference type="AGR" id="RGD:2720"/>
<dbReference type="GeneTree" id="ENSGT00960000190815"/>
<dbReference type="HOGENOM" id="CLU_2222386_0_0_1"/>
<dbReference type="InParanoid" id="P55248"/>
<dbReference type="PRO" id="PR:P55248"/>
<dbReference type="Proteomes" id="UP000002494">
    <property type="component" value="Chromosome 15"/>
</dbReference>
<dbReference type="Bgee" id="ENSRNOG00000013433">
    <property type="expression patterns" value="Expressed in heart and 17 other cell types or tissues"/>
</dbReference>